<gene>
    <name type="primary">urm1</name>
    <name type="ORF">SPCC548.04</name>
</gene>
<proteinExistence type="inferred from homology"/>
<evidence type="ECO:0000255" key="1">
    <source>
        <dbReference type="HAMAP-Rule" id="MF_03048"/>
    </source>
</evidence>
<comment type="function">
    <text evidence="1">Acts as a sulfur carrier required for 2-thiolation of mcm(5)S(2)U at tRNA wobble positions of cytosolic tRNA(Lys), tRNA(Glu) and tRNA(Gln). Serves as sulfur donor in tRNA 2-thiolation reaction by being thiocarboxylated (-COSH) at its C-terminus by the MOCS3 homolog UBA4. The sulfur is then transferred to tRNA to form 2-thiolation of mcm(5)S(2)U. Prior mcm(5) tRNA modification by the elongator complex is required for 2-thiolation. Also acts as a ubiquitin-like protein (UBL) that is covalently conjugated via an isopeptide bond to lysine residues of target proteins such as AHP1. The thiocarboxylated form serves as substrate for conjugation and oxidative stress specifically induces the formation of UBL-protein conjugates.</text>
</comment>
<comment type="pathway">
    <text evidence="1">tRNA modification; 5-methoxycarbonylmethyl-2-thiouridine-tRNA biosynthesis.</text>
</comment>
<comment type="subcellular location">
    <subcellularLocation>
        <location evidence="1">Cytoplasm</location>
    </subcellularLocation>
</comment>
<comment type="PTM">
    <text evidence="1">C-terminal thiocarboxylation occurs in 2 steps, it is first acyl-adenylated (-COAMP) via the hesA/moeB/thiF part of UBA4, then thiocarboxylated (-COSH) via the rhodanese domain of UBA4.</text>
</comment>
<comment type="similarity">
    <text evidence="1">Belongs to the URM1 family.</text>
</comment>
<protein>
    <recommendedName>
        <fullName evidence="1">Ubiquitin-related modifier 1</fullName>
    </recommendedName>
</protein>
<sequence>MAIKVELLGGLDLLFNKQKALSLSLSNLGSTKLGSLIDYMAQIIEKPSQKDLFILNGTVRPGIIVLVNDQDWELLEKEEYNLEEGDEVVFVSTLHGG</sequence>
<dbReference type="EMBL" id="CU329672">
    <property type="protein sequence ID" value="CAB94946.2"/>
    <property type="molecule type" value="Genomic_DNA"/>
</dbReference>
<dbReference type="RefSeq" id="NP_587744.2">
    <property type="nucleotide sequence ID" value="NM_001022738.3"/>
</dbReference>
<dbReference type="SMR" id="Q9P3U9"/>
<dbReference type="BioGRID" id="275348">
    <property type="interactions" value="6"/>
</dbReference>
<dbReference type="FunCoup" id="Q9P3U9">
    <property type="interactions" value="498"/>
</dbReference>
<dbReference type="STRING" id="284812.Q9P3U9"/>
<dbReference type="iPTMnet" id="Q9P3U9"/>
<dbReference type="PaxDb" id="4896-SPCC548.04.1"/>
<dbReference type="EnsemblFungi" id="SPCC548.04.1">
    <property type="protein sequence ID" value="SPCC548.04.1:pep"/>
    <property type="gene ID" value="SPCC548.04"/>
</dbReference>
<dbReference type="GeneID" id="2538765"/>
<dbReference type="KEGG" id="spo:2538765"/>
<dbReference type="PomBase" id="SPCC548.04">
    <property type="gene designation" value="urm1"/>
</dbReference>
<dbReference type="VEuPathDB" id="FungiDB:SPCC548.04"/>
<dbReference type="eggNOG" id="KOG4146">
    <property type="taxonomic scope" value="Eukaryota"/>
</dbReference>
<dbReference type="HOGENOM" id="CLU_148208_0_0_1"/>
<dbReference type="InParanoid" id="Q9P3U9"/>
<dbReference type="OMA" id="IHFMAEK"/>
<dbReference type="PhylomeDB" id="Q9P3U9"/>
<dbReference type="UniPathway" id="UPA00988"/>
<dbReference type="PRO" id="PR:Q9P3U9"/>
<dbReference type="Proteomes" id="UP000002485">
    <property type="component" value="Chromosome III"/>
</dbReference>
<dbReference type="GO" id="GO:0005829">
    <property type="term" value="C:cytosol"/>
    <property type="evidence" value="ECO:0007005"/>
    <property type="project" value="PomBase"/>
</dbReference>
<dbReference type="GO" id="GO:0005634">
    <property type="term" value="C:nucleus"/>
    <property type="evidence" value="ECO:0007005"/>
    <property type="project" value="PomBase"/>
</dbReference>
<dbReference type="GO" id="GO:0031386">
    <property type="term" value="F:protein tag activity"/>
    <property type="evidence" value="ECO:0000318"/>
    <property type="project" value="GO_Central"/>
</dbReference>
<dbReference type="GO" id="GO:0032447">
    <property type="term" value="P:protein urmylation"/>
    <property type="evidence" value="ECO:0000318"/>
    <property type="project" value="GO_Central"/>
</dbReference>
<dbReference type="GO" id="GO:0002143">
    <property type="term" value="P:tRNA wobble position uridine thiolation"/>
    <property type="evidence" value="ECO:0000266"/>
    <property type="project" value="PomBase"/>
</dbReference>
<dbReference type="CDD" id="cd01764">
    <property type="entry name" value="Ubl_Urm1"/>
    <property type="match status" value="1"/>
</dbReference>
<dbReference type="Gene3D" id="3.10.20.30">
    <property type="match status" value="1"/>
</dbReference>
<dbReference type="HAMAP" id="MF_03048">
    <property type="entry name" value="Urm1"/>
    <property type="match status" value="1"/>
</dbReference>
<dbReference type="InterPro" id="IPR012675">
    <property type="entry name" value="Beta-grasp_dom_sf"/>
</dbReference>
<dbReference type="InterPro" id="IPR016155">
    <property type="entry name" value="Mopterin_synth/thiamin_S_b"/>
</dbReference>
<dbReference type="InterPro" id="IPR015221">
    <property type="entry name" value="Urm1"/>
</dbReference>
<dbReference type="PANTHER" id="PTHR14986">
    <property type="entry name" value="RURM1 PROTEIN"/>
    <property type="match status" value="1"/>
</dbReference>
<dbReference type="Pfam" id="PF09138">
    <property type="entry name" value="Urm1"/>
    <property type="match status" value="1"/>
</dbReference>
<dbReference type="PIRSF" id="PIRSF037379">
    <property type="entry name" value="Ubiquitin-related_modifier_1"/>
    <property type="match status" value="1"/>
</dbReference>
<dbReference type="SUPFAM" id="SSF54285">
    <property type="entry name" value="MoaD/ThiS"/>
    <property type="match status" value="1"/>
</dbReference>
<accession>Q9P3U9</accession>
<organism>
    <name type="scientific">Schizosaccharomyces pombe (strain 972 / ATCC 24843)</name>
    <name type="common">Fission yeast</name>
    <dbReference type="NCBI Taxonomy" id="284812"/>
    <lineage>
        <taxon>Eukaryota</taxon>
        <taxon>Fungi</taxon>
        <taxon>Dikarya</taxon>
        <taxon>Ascomycota</taxon>
        <taxon>Taphrinomycotina</taxon>
        <taxon>Schizosaccharomycetes</taxon>
        <taxon>Schizosaccharomycetales</taxon>
        <taxon>Schizosaccharomycetaceae</taxon>
        <taxon>Schizosaccharomyces</taxon>
    </lineage>
</organism>
<reference key="1">
    <citation type="journal article" date="2002" name="Nature">
        <title>The genome sequence of Schizosaccharomyces pombe.</title>
        <authorList>
            <person name="Wood V."/>
            <person name="Gwilliam R."/>
            <person name="Rajandream M.A."/>
            <person name="Lyne M.H."/>
            <person name="Lyne R."/>
            <person name="Stewart A."/>
            <person name="Sgouros J.G."/>
            <person name="Peat N."/>
            <person name="Hayles J."/>
            <person name="Baker S.G."/>
            <person name="Basham D."/>
            <person name="Bowman S."/>
            <person name="Brooks K."/>
            <person name="Brown D."/>
            <person name="Brown S."/>
            <person name="Chillingworth T."/>
            <person name="Churcher C.M."/>
            <person name="Collins M."/>
            <person name="Connor R."/>
            <person name="Cronin A."/>
            <person name="Davis P."/>
            <person name="Feltwell T."/>
            <person name="Fraser A."/>
            <person name="Gentles S."/>
            <person name="Goble A."/>
            <person name="Hamlin N."/>
            <person name="Harris D.E."/>
            <person name="Hidalgo J."/>
            <person name="Hodgson G."/>
            <person name="Holroyd S."/>
            <person name="Hornsby T."/>
            <person name="Howarth S."/>
            <person name="Huckle E.J."/>
            <person name="Hunt S."/>
            <person name="Jagels K."/>
            <person name="James K.D."/>
            <person name="Jones L."/>
            <person name="Jones M."/>
            <person name="Leather S."/>
            <person name="McDonald S."/>
            <person name="McLean J."/>
            <person name="Mooney P."/>
            <person name="Moule S."/>
            <person name="Mungall K.L."/>
            <person name="Murphy L.D."/>
            <person name="Niblett D."/>
            <person name="Odell C."/>
            <person name="Oliver K."/>
            <person name="O'Neil S."/>
            <person name="Pearson D."/>
            <person name="Quail M.A."/>
            <person name="Rabbinowitsch E."/>
            <person name="Rutherford K.M."/>
            <person name="Rutter S."/>
            <person name="Saunders D."/>
            <person name="Seeger K."/>
            <person name="Sharp S."/>
            <person name="Skelton J."/>
            <person name="Simmonds M.N."/>
            <person name="Squares R."/>
            <person name="Squares S."/>
            <person name="Stevens K."/>
            <person name="Taylor K."/>
            <person name="Taylor R.G."/>
            <person name="Tivey A."/>
            <person name="Walsh S.V."/>
            <person name="Warren T."/>
            <person name="Whitehead S."/>
            <person name="Woodward J.R."/>
            <person name="Volckaert G."/>
            <person name="Aert R."/>
            <person name="Robben J."/>
            <person name="Grymonprez B."/>
            <person name="Weltjens I."/>
            <person name="Vanstreels E."/>
            <person name="Rieger M."/>
            <person name="Schaefer M."/>
            <person name="Mueller-Auer S."/>
            <person name="Gabel C."/>
            <person name="Fuchs M."/>
            <person name="Duesterhoeft A."/>
            <person name="Fritzc C."/>
            <person name="Holzer E."/>
            <person name="Moestl D."/>
            <person name="Hilbert H."/>
            <person name="Borzym K."/>
            <person name="Langer I."/>
            <person name="Beck A."/>
            <person name="Lehrach H."/>
            <person name="Reinhardt R."/>
            <person name="Pohl T.M."/>
            <person name="Eger P."/>
            <person name="Zimmermann W."/>
            <person name="Wedler H."/>
            <person name="Wambutt R."/>
            <person name="Purnelle B."/>
            <person name="Goffeau A."/>
            <person name="Cadieu E."/>
            <person name="Dreano S."/>
            <person name="Gloux S."/>
            <person name="Lelaure V."/>
            <person name="Mottier S."/>
            <person name="Galibert F."/>
            <person name="Aves S.J."/>
            <person name="Xiang Z."/>
            <person name="Hunt C."/>
            <person name="Moore K."/>
            <person name="Hurst S.M."/>
            <person name="Lucas M."/>
            <person name="Rochet M."/>
            <person name="Gaillardin C."/>
            <person name="Tallada V.A."/>
            <person name="Garzon A."/>
            <person name="Thode G."/>
            <person name="Daga R.R."/>
            <person name="Cruzado L."/>
            <person name="Jimenez J."/>
            <person name="Sanchez M."/>
            <person name="del Rey F."/>
            <person name="Benito J."/>
            <person name="Dominguez A."/>
            <person name="Revuelta J.L."/>
            <person name="Moreno S."/>
            <person name="Armstrong J."/>
            <person name="Forsburg S.L."/>
            <person name="Cerutti L."/>
            <person name="Lowe T."/>
            <person name="McCombie W.R."/>
            <person name="Paulsen I."/>
            <person name="Potashkin J."/>
            <person name="Shpakovski G.V."/>
            <person name="Ussery D."/>
            <person name="Barrell B.G."/>
            <person name="Nurse P."/>
        </authorList>
    </citation>
    <scope>NUCLEOTIDE SEQUENCE [LARGE SCALE GENOMIC DNA]</scope>
    <source>
        <strain>972 / ATCC 24843</strain>
    </source>
</reference>
<feature type="chain" id="PRO_0000330335" description="Ubiquitin-related modifier 1">
    <location>
        <begin position="1"/>
        <end position="97"/>
    </location>
</feature>
<feature type="modified residue" description="1-thioglycine" evidence="1">
    <location>
        <position position="97"/>
    </location>
</feature>
<feature type="cross-link" description="Glycyl lysine isopeptide (Gly-Lys) (interchain with K-? in acceptor proteins)" evidence="1">
    <location>
        <position position="97"/>
    </location>
</feature>
<keyword id="KW-0963">Cytoplasm</keyword>
<keyword id="KW-1017">Isopeptide bond</keyword>
<keyword id="KW-1185">Reference proteome</keyword>
<keyword id="KW-0819">tRNA processing</keyword>
<keyword id="KW-0833">Ubl conjugation pathway</keyword>
<name>URM1_SCHPO</name>